<accession>P48844</accession>
<reference key="1">
    <citation type="journal article" date="1994" name="Yeast">
        <title>Development of a transformation system for the yeast Yamadazyma (Pichia) ohmeri.</title>
        <authorList>
            <person name="Piredda S."/>
            <person name="Gaillardin C."/>
        </authorList>
    </citation>
    <scope>NUCLEOTIDE SEQUENCE [GENOMIC DNA]</scope>
</reference>
<dbReference type="EC" id="4.1.1.23"/>
<dbReference type="EMBL" id="Z35100">
    <property type="protein sequence ID" value="CAA84483.1"/>
    <property type="molecule type" value="Genomic_DNA"/>
</dbReference>
<dbReference type="PIR" id="S50699">
    <property type="entry name" value="S50699"/>
</dbReference>
<dbReference type="SMR" id="P48844"/>
<dbReference type="UniPathway" id="UPA00070">
    <property type="reaction ID" value="UER00120"/>
</dbReference>
<dbReference type="GO" id="GO:0005829">
    <property type="term" value="C:cytosol"/>
    <property type="evidence" value="ECO:0007669"/>
    <property type="project" value="TreeGrafter"/>
</dbReference>
<dbReference type="GO" id="GO:0004590">
    <property type="term" value="F:orotidine-5'-phosphate decarboxylase activity"/>
    <property type="evidence" value="ECO:0007669"/>
    <property type="project" value="UniProtKB-EC"/>
</dbReference>
<dbReference type="GO" id="GO:0006207">
    <property type="term" value="P:'de novo' pyrimidine nucleobase biosynthetic process"/>
    <property type="evidence" value="ECO:0007669"/>
    <property type="project" value="InterPro"/>
</dbReference>
<dbReference type="GO" id="GO:0044205">
    <property type="term" value="P:'de novo' UMP biosynthetic process"/>
    <property type="evidence" value="ECO:0007669"/>
    <property type="project" value="UniProtKB-UniPathway"/>
</dbReference>
<dbReference type="CDD" id="cd04725">
    <property type="entry name" value="OMP_decarboxylase_like"/>
    <property type="match status" value="1"/>
</dbReference>
<dbReference type="FunFam" id="3.20.20.70:FF:000114">
    <property type="entry name" value="Decarboxylase,orotidine phosphate"/>
    <property type="match status" value="1"/>
</dbReference>
<dbReference type="Gene3D" id="3.20.20.70">
    <property type="entry name" value="Aldolase class I"/>
    <property type="match status" value="1"/>
</dbReference>
<dbReference type="InterPro" id="IPR013785">
    <property type="entry name" value="Aldolase_TIM"/>
</dbReference>
<dbReference type="InterPro" id="IPR014732">
    <property type="entry name" value="OMPdecase"/>
</dbReference>
<dbReference type="InterPro" id="IPR018089">
    <property type="entry name" value="OMPdecase_AS"/>
</dbReference>
<dbReference type="InterPro" id="IPR001754">
    <property type="entry name" value="OMPdeCOase_dom"/>
</dbReference>
<dbReference type="InterPro" id="IPR011060">
    <property type="entry name" value="RibuloseP-bd_barrel"/>
</dbReference>
<dbReference type="NCBIfam" id="TIGR01740">
    <property type="entry name" value="pyrF"/>
    <property type="match status" value="1"/>
</dbReference>
<dbReference type="PANTHER" id="PTHR32119">
    <property type="entry name" value="OROTIDINE 5'-PHOSPHATE DECARBOXYLASE"/>
    <property type="match status" value="1"/>
</dbReference>
<dbReference type="PANTHER" id="PTHR32119:SF2">
    <property type="entry name" value="OROTIDINE 5'-PHOSPHATE DECARBOXYLASE"/>
    <property type="match status" value="1"/>
</dbReference>
<dbReference type="Pfam" id="PF00215">
    <property type="entry name" value="OMPdecase"/>
    <property type="match status" value="1"/>
</dbReference>
<dbReference type="SMART" id="SM00934">
    <property type="entry name" value="OMPdecase"/>
    <property type="match status" value="1"/>
</dbReference>
<dbReference type="SUPFAM" id="SSF51366">
    <property type="entry name" value="Ribulose-phoshate binding barrel"/>
    <property type="match status" value="1"/>
</dbReference>
<dbReference type="PROSITE" id="PS00156">
    <property type="entry name" value="OMPDECASE"/>
    <property type="match status" value="1"/>
</dbReference>
<keyword id="KW-0210">Decarboxylase</keyword>
<keyword id="KW-0456">Lyase</keyword>
<keyword id="KW-0665">Pyrimidine biosynthesis</keyword>
<name>PYRF_KODOH</name>
<evidence type="ECO:0000250" key="1"/>
<evidence type="ECO:0000255" key="2">
    <source>
        <dbReference type="PROSITE-ProRule" id="PRU10110"/>
    </source>
</evidence>
<evidence type="ECO:0000305" key="3"/>
<protein>
    <recommendedName>
        <fullName>Orotidine 5'-phosphate decarboxylase</fullName>
        <ecNumber>4.1.1.23</ecNumber>
    </recommendedName>
    <alternativeName>
        <fullName>OMP decarboxylase</fullName>
        <shortName>OMPDCase</shortName>
        <shortName>OMPdecase</shortName>
    </alternativeName>
    <alternativeName>
        <fullName>Uridine 5'-monophosphate synthase</fullName>
        <shortName>UMP synthase</shortName>
    </alternativeName>
</protein>
<comment type="catalytic activity">
    <reaction evidence="2">
        <text>orotidine 5'-phosphate + H(+) = UMP + CO2</text>
        <dbReference type="Rhea" id="RHEA:11596"/>
        <dbReference type="ChEBI" id="CHEBI:15378"/>
        <dbReference type="ChEBI" id="CHEBI:16526"/>
        <dbReference type="ChEBI" id="CHEBI:57538"/>
        <dbReference type="ChEBI" id="CHEBI:57865"/>
        <dbReference type="EC" id="4.1.1.23"/>
    </reaction>
</comment>
<comment type="pathway">
    <text>Pyrimidine metabolism; UMP biosynthesis via de novo pathway; UMP from orotate: step 2/2.</text>
</comment>
<comment type="similarity">
    <text evidence="3">Belongs to the OMP decarboxylase family.</text>
</comment>
<sequence>MSYTARAAKHPSPVAQRLLRLMDTKKTNLCASVDVKTTAEFLSLIDKLGPYICLVKTHIDIIDDFSFDGTIKPLLELAKKHNFMIFEDRKFADIGNTVKSQYSGGVYKIAQWSDITNAHGITGAGIVNGLKEAAQETTSEPRGLLMLAELSSKGSLAYGEYTEKTVEIAKSDKEFVVGFIAQRDMGGRDEGFDWLIMTPGVGLDDKGDALGQQYRTVNEVISTGTDIIIVGRGLFGKGRDPEVEGKRYRDAGWKAYQKRLQ</sequence>
<proteinExistence type="inferred from homology"/>
<feature type="chain" id="PRO_0000134690" description="Orotidine 5'-phosphate decarboxylase">
    <location>
        <begin position="1"/>
        <end position="261"/>
    </location>
</feature>
<feature type="active site" description="Proton donor" evidence="2">
    <location>
        <position position="90"/>
    </location>
</feature>
<feature type="binding site" evidence="1">
    <location>
        <position position="34"/>
    </location>
    <ligand>
        <name>substrate</name>
    </ligand>
</feature>
<feature type="binding site" evidence="1">
    <location>
        <begin position="56"/>
        <end position="58"/>
    </location>
    <ligand>
        <name>substrate</name>
    </ligand>
</feature>
<feature type="binding site" evidence="1">
    <location>
        <begin position="88"/>
        <end position="97"/>
    </location>
    <ligand>
        <name>substrate</name>
    </ligand>
</feature>
<feature type="binding site" evidence="1">
    <location>
        <position position="214"/>
    </location>
    <ligand>
        <name>substrate</name>
    </ligand>
</feature>
<feature type="binding site" evidence="1">
    <location>
        <position position="232"/>
    </location>
    <ligand>
        <name>substrate</name>
    </ligand>
</feature>
<organism>
    <name type="scientific">Kodamaea ohmeri</name>
    <name type="common">Yeast</name>
    <name type="synonym">Yamadazyma ohmeri</name>
    <dbReference type="NCBI Taxonomy" id="34356"/>
    <lineage>
        <taxon>Eukaryota</taxon>
        <taxon>Fungi</taxon>
        <taxon>Dikarya</taxon>
        <taxon>Ascomycota</taxon>
        <taxon>Saccharomycotina</taxon>
        <taxon>Pichiomycetes</taxon>
        <taxon>Debaryomycetaceae</taxon>
        <taxon>Kodamaea</taxon>
    </lineage>
</organism>
<gene>
    <name type="primary">URA3</name>
</gene>